<feature type="chain" id="PRO_0000197903" description="Exodeoxyribonuclease 7 large subunit">
    <location>
        <begin position="1"/>
        <end position="445"/>
    </location>
</feature>
<sequence>MADRNEQILTPSQLNSLARDLLEGGFPLVWVEAELSSVTRPASGHLYFTLKDARAQIRCAMFKPKSTWLKFQPREGLRVLARGRLTLYEARGDYQLVLDHMEEAGEGALRRAFDELRARLTAEGLFDAERKQALPAHVRRLAVITSPSGAAVRDVLSVLARRFPLLEVDLLPSLVQGDSAAAQITSLLQRADASGRYDVILITRGGGSLEDLWAFNDERLARAIAAAQTPVVSAVGHETDFSLSDFVADVRAPTPSVAAELLVPDQRELVARVRRAQARMTQLQQHALGNAMQRADRLALRLRAQSPQARLQLLHRRQEDAGRQLRARMMHVLERLQARVQRGQAQLQSHNPQRHLAGLQQRLRALHPQAAMQRRLQHDQLQLRRIARSLEAVSPLATVARGYAIVTRPANGSVVRSAAEVVTGERLRAQLADGSIEVRVESGES</sequence>
<organism>
    <name type="scientific">Xanthomonas axonopodis pv. citri (strain 306)</name>
    <dbReference type="NCBI Taxonomy" id="190486"/>
    <lineage>
        <taxon>Bacteria</taxon>
        <taxon>Pseudomonadati</taxon>
        <taxon>Pseudomonadota</taxon>
        <taxon>Gammaproteobacteria</taxon>
        <taxon>Lysobacterales</taxon>
        <taxon>Lysobacteraceae</taxon>
        <taxon>Xanthomonas</taxon>
    </lineage>
</organism>
<evidence type="ECO:0000255" key="1">
    <source>
        <dbReference type="HAMAP-Rule" id="MF_00378"/>
    </source>
</evidence>
<gene>
    <name evidence="1" type="primary">xseA</name>
    <name type="ordered locus">XAC2410</name>
</gene>
<keyword id="KW-0963">Cytoplasm</keyword>
<keyword id="KW-0269">Exonuclease</keyword>
<keyword id="KW-0378">Hydrolase</keyword>
<keyword id="KW-0540">Nuclease</keyword>
<accession>Q8PJW7</accession>
<comment type="function">
    <text evidence="1">Bidirectionally degrades single-stranded DNA into large acid-insoluble oligonucleotides, which are then degraded further into small acid-soluble oligonucleotides.</text>
</comment>
<comment type="catalytic activity">
    <reaction evidence="1">
        <text>Exonucleolytic cleavage in either 5'- to 3'- or 3'- to 5'-direction to yield nucleoside 5'-phosphates.</text>
        <dbReference type="EC" id="3.1.11.6"/>
    </reaction>
</comment>
<comment type="subunit">
    <text evidence="1">Heterooligomer composed of large and small subunits.</text>
</comment>
<comment type="subcellular location">
    <subcellularLocation>
        <location evidence="1">Cytoplasm</location>
    </subcellularLocation>
</comment>
<comment type="similarity">
    <text evidence="1">Belongs to the XseA family.</text>
</comment>
<reference key="1">
    <citation type="journal article" date="2002" name="Nature">
        <title>Comparison of the genomes of two Xanthomonas pathogens with differing host specificities.</title>
        <authorList>
            <person name="da Silva A.C.R."/>
            <person name="Ferro J.A."/>
            <person name="Reinach F.C."/>
            <person name="Farah C.S."/>
            <person name="Furlan L.R."/>
            <person name="Quaggio R.B."/>
            <person name="Monteiro-Vitorello C.B."/>
            <person name="Van Sluys M.A."/>
            <person name="Almeida N.F. Jr."/>
            <person name="Alves L.M.C."/>
            <person name="do Amaral A.M."/>
            <person name="Bertolini M.C."/>
            <person name="Camargo L.E.A."/>
            <person name="Camarotte G."/>
            <person name="Cannavan F."/>
            <person name="Cardozo J."/>
            <person name="Chambergo F."/>
            <person name="Ciapina L.P."/>
            <person name="Cicarelli R.M.B."/>
            <person name="Coutinho L.L."/>
            <person name="Cursino-Santos J.R."/>
            <person name="El-Dorry H."/>
            <person name="Faria J.B."/>
            <person name="Ferreira A.J.S."/>
            <person name="Ferreira R.C.C."/>
            <person name="Ferro M.I.T."/>
            <person name="Formighieri E.F."/>
            <person name="Franco M.C."/>
            <person name="Greggio C.C."/>
            <person name="Gruber A."/>
            <person name="Katsuyama A.M."/>
            <person name="Kishi L.T."/>
            <person name="Leite R.P."/>
            <person name="Lemos E.G.M."/>
            <person name="Lemos M.V.F."/>
            <person name="Locali E.C."/>
            <person name="Machado M.A."/>
            <person name="Madeira A.M.B.N."/>
            <person name="Martinez-Rossi N.M."/>
            <person name="Martins E.C."/>
            <person name="Meidanis J."/>
            <person name="Menck C.F.M."/>
            <person name="Miyaki C.Y."/>
            <person name="Moon D.H."/>
            <person name="Moreira L.M."/>
            <person name="Novo M.T.M."/>
            <person name="Okura V.K."/>
            <person name="Oliveira M.C."/>
            <person name="Oliveira V.R."/>
            <person name="Pereira H.A."/>
            <person name="Rossi A."/>
            <person name="Sena J.A.D."/>
            <person name="Silva C."/>
            <person name="de Souza R.F."/>
            <person name="Spinola L.A.F."/>
            <person name="Takita M.A."/>
            <person name="Tamura R.E."/>
            <person name="Teixeira E.C."/>
            <person name="Tezza R.I.D."/>
            <person name="Trindade dos Santos M."/>
            <person name="Truffi D."/>
            <person name="Tsai S.M."/>
            <person name="White F.F."/>
            <person name="Setubal J.C."/>
            <person name="Kitajima J.P."/>
        </authorList>
    </citation>
    <scope>NUCLEOTIDE SEQUENCE [LARGE SCALE GENOMIC DNA]</scope>
    <source>
        <strain>306</strain>
    </source>
</reference>
<dbReference type="EC" id="3.1.11.6" evidence="1"/>
<dbReference type="EMBL" id="AE008923">
    <property type="protein sequence ID" value="AAM37262.1"/>
    <property type="molecule type" value="Genomic_DNA"/>
</dbReference>
<dbReference type="RefSeq" id="WP_011051563.1">
    <property type="nucleotide sequence ID" value="NC_003919.1"/>
</dbReference>
<dbReference type="SMR" id="Q8PJW7"/>
<dbReference type="GeneID" id="66911523"/>
<dbReference type="KEGG" id="xac:XAC2410"/>
<dbReference type="eggNOG" id="COG1570">
    <property type="taxonomic scope" value="Bacteria"/>
</dbReference>
<dbReference type="HOGENOM" id="CLU_023625_3_1_6"/>
<dbReference type="Proteomes" id="UP000000576">
    <property type="component" value="Chromosome"/>
</dbReference>
<dbReference type="GO" id="GO:0005737">
    <property type="term" value="C:cytoplasm"/>
    <property type="evidence" value="ECO:0007669"/>
    <property type="project" value="UniProtKB-SubCell"/>
</dbReference>
<dbReference type="GO" id="GO:0009318">
    <property type="term" value="C:exodeoxyribonuclease VII complex"/>
    <property type="evidence" value="ECO:0007669"/>
    <property type="project" value="InterPro"/>
</dbReference>
<dbReference type="GO" id="GO:0008855">
    <property type="term" value="F:exodeoxyribonuclease VII activity"/>
    <property type="evidence" value="ECO:0007669"/>
    <property type="project" value="UniProtKB-UniRule"/>
</dbReference>
<dbReference type="GO" id="GO:0003676">
    <property type="term" value="F:nucleic acid binding"/>
    <property type="evidence" value="ECO:0007669"/>
    <property type="project" value="InterPro"/>
</dbReference>
<dbReference type="GO" id="GO:0006308">
    <property type="term" value="P:DNA catabolic process"/>
    <property type="evidence" value="ECO:0007669"/>
    <property type="project" value="UniProtKB-UniRule"/>
</dbReference>
<dbReference type="CDD" id="cd04489">
    <property type="entry name" value="ExoVII_LU_OBF"/>
    <property type="match status" value="1"/>
</dbReference>
<dbReference type="HAMAP" id="MF_00378">
    <property type="entry name" value="Exonuc_7_L"/>
    <property type="match status" value="1"/>
</dbReference>
<dbReference type="InterPro" id="IPR003753">
    <property type="entry name" value="Exonuc_VII_L"/>
</dbReference>
<dbReference type="InterPro" id="IPR020579">
    <property type="entry name" value="Exonuc_VII_lsu_C"/>
</dbReference>
<dbReference type="InterPro" id="IPR025824">
    <property type="entry name" value="OB-fold_nuc-bd_dom"/>
</dbReference>
<dbReference type="NCBIfam" id="TIGR00237">
    <property type="entry name" value="xseA"/>
    <property type="match status" value="1"/>
</dbReference>
<dbReference type="PANTHER" id="PTHR30008">
    <property type="entry name" value="EXODEOXYRIBONUCLEASE 7 LARGE SUBUNIT"/>
    <property type="match status" value="1"/>
</dbReference>
<dbReference type="PANTHER" id="PTHR30008:SF0">
    <property type="entry name" value="EXODEOXYRIBONUCLEASE 7 LARGE SUBUNIT"/>
    <property type="match status" value="1"/>
</dbReference>
<dbReference type="Pfam" id="PF02601">
    <property type="entry name" value="Exonuc_VII_L"/>
    <property type="match status" value="1"/>
</dbReference>
<dbReference type="Pfam" id="PF13742">
    <property type="entry name" value="tRNA_anti_2"/>
    <property type="match status" value="1"/>
</dbReference>
<protein>
    <recommendedName>
        <fullName evidence="1">Exodeoxyribonuclease 7 large subunit</fullName>
        <ecNumber evidence="1">3.1.11.6</ecNumber>
    </recommendedName>
    <alternativeName>
        <fullName evidence="1">Exodeoxyribonuclease VII large subunit</fullName>
        <shortName evidence="1">Exonuclease VII large subunit</shortName>
    </alternativeName>
</protein>
<proteinExistence type="inferred from homology"/>
<name>EX7L_XANAC</name>